<protein>
    <recommendedName>
        <fullName evidence="2">Elongation factor Tu 2</fullName>
        <shortName evidence="2">EF-Tu 2</shortName>
        <ecNumber evidence="2">3.6.5.3</ecNumber>
    </recommendedName>
</protein>
<sequence length="390" mass="42781">MVQVVEAFGKPHVNVGTIGHVDHGKTTLTAAITKHYGNFVAYDQIDKAPEERKRGITIATAHVEYQTEKRHYAHVDCPGHADYVKNMIVGAAQMDAAILVVSGVDGPMPQTREHILLAKQVGVGYIVVYINKADVSDPDMIGLVEMEVRELLSKYGFPGDEVPVVIGSALKALEDDDGEYGKKSIDKLMERLDDYVEVPPRSVDLPFLLPIEDVFSISGRGTVVTGRIEKGEIKIGDEIEIIGLKATQKTTCTGVEMFKKLLEKGSAGLNVGILLRGTKREEVERGQVLAKPGTITPHRKFKAEVYILKKEEGGRHTPFFANYQPQFYLRTTDVTGSIKLLEGKEMVMPGDNVSIEVELQVPIAMDKGLRFAIREGGRTVGSGVVSEILE</sequence>
<reference key="1">
    <citation type="journal article" date="2005" name="PLoS Biol.">
        <title>The Wolbachia genome of Brugia malayi: endosymbiont evolution within a human pathogenic nematode.</title>
        <authorList>
            <person name="Foster J."/>
            <person name="Ganatra M."/>
            <person name="Kamal I."/>
            <person name="Ware J."/>
            <person name="Makarova K."/>
            <person name="Ivanova N."/>
            <person name="Bhattacharyya A."/>
            <person name="Kapatral V."/>
            <person name="Kumar S."/>
            <person name="Posfai J."/>
            <person name="Vincze T."/>
            <person name="Ingram J."/>
            <person name="Moran L."/>
            <person name="Lapidus A."/>
            <person name="Omelchenko M."/>
            <person name="Kyrpides N."/>
            <person name="Ghedin E."/>
            <person name="Wang S."/>
            <person name="Goltsman E."/>
            <person name="Joukov V."/>
            <person name="Ostrovskaya O."/>
            <person name="Tsukerman K."/>
            <person name="Mazur M."/>
            <person name="Comb D."/>
            <person name="Koonin E."/>
            <person name="Slatko B."/>
        </authorList>
    </citation>
    <scope>NUCLEOTIDE SEQUENCE [LARGE SCALE GENOMIC DNA]</scope>
    <source>
        <strain>TRS</strain>
    </source>
</reference>
<keyword id="KW-0963">Cytoplasm</keyword>
<keyword id="KW-0251">Elongation factor</keyword>
<keyword id="KW-0342">GTP-binding</keyword>
<keyword id="KW-0378">Hydrolase</keyword>
<keyword id="KW-0460">Magnesium</keyword>
<keyword id="KW-0479">Metal-binding</keyword>
<keyword id="KW-0547">Nucleotide-binding</keyword>
<keyword id="KW-0648">Protein biosynthesis</keyword>
<keyword id="KW-1185">Reference proteome</keyword>
<comment type="function">
    <text evidence="2">GTP hydrolase that promotes the GTP-dependent binding of aminoacyl-tRNA to the A-site of ribosomes during protein biosynthesis.</text>
</comment>
<comment type="catalytic activity">
    <reaction evidence="2">
        <text>GTP + H2O = GDP + phosphate + H(+)</text>
        <dbReference type="Rhea" id="RHEA:19669"/>
        <dbReference type="ChEBI" id="CHEBI:15377"/>
        <dbReference type="ChEBI" id="CHEBI:15378"/>
        <dbReference type="ChEBI" id="CHEBI:37565"/>
        <dbReference type="ChEBI" id="CHEBI:43474"/>
        <dbReference type="ChEBI" id="CHEBI:58189"/>
        <dbReference type="EC" id="3.6.5.3"/>
    </reaction>
    <physiologicalReaction direction="left-to-right" evidence="2">
        <dbReference type="Rhea" id="RHEA:19670"/>
    </physiologicalReaction>
</comment>
<comment type="subunit">
    <text evidence="2">Monomer.</text>
</comment>
<comment type="subcellular location">
    <subcellularLocation>
        <location evidence="2">Cytoplasm</location>
    </subcellularLocation>
</comment>
<comment type="similarity">
    <text evidence="2">Belongs to the TRAFAC class translation factor GTPase superfamily. Classic translation factor GTPase family. EF-Tu/EF-1A subfamily.</text>
</comment>
<feature type="chain" id="PRO_0000337574" description="Elongation factor Tu 2">
    <location>
        <begin position="1"/>
        <end position="390"/>
    </location>
</feature>
<feature type="domain" description="tr-type G">
    <location>
        <begin position="10"/>
        <end position="201"/>
    </location>
</feature>
<feature type="region of interest" description="G1" evidence="1">
    <location>
        <begin position="19"/>
        <end position="26"/>
    </location>
</feature>
<feature type="region of interest" description="G2" evidence="1">
    <location>
        <begin position="55"/>
        <end position="59"/>
    </location>
</feature>
<feature type="region of interest" description="G3" evidence="1">
    <location>
        <begin position="76"/>
        <end position="79"/>
    </location>
</feature>
<feature type="region of interest" description="G4" evidence="1">
    <location>
        <begin position="131"/>
        <end position="134"/>
    </location>
</feature>
<feature type="region of interest" description="G5" evidence="1">
    <location>
        <begin position="168"/>
        <end position="170"/>
    </location>
</feature>
<feature type="binding site" evidence="2">
    <location>
        <begin position="19"/>
        <end position="26"/>
    </location>
    <ligand>
        <name>GTP</name>
        <dbReference type="ChEBI" id="CHEBI:37565"/>
    </ligand>
</feature>
<feature type="binding site" evidence="2">
    <location>
        <position position="26"/>
    </location>
    <ligand>
        <name>Mg(2+)</name>
        <dbReference type="ChEBI" id="CHEBI:18420"/>
    </ligand>
</feature>
<feature type="binding site" evidence="2">
    <location>
        <begin position="76"/>
        <end position="80"/>
    </location>
    <ligand>
        <name>GTP</name>
        <dbReference type="ChEBI" id="CHEBI:37565"/>
    </ligand>
</feature>
<feature type="binding site" evidence="2">
    <location>
        <begin position="131"/>
        <end position="134"/>
    </location>
    <ligand>
        <name>GTP</name>
        <dbReference type="ChEBI" id="CHEBI:37565"/>
    </ligand>
</feature>
<evidence type="ECO:0000250" key="1"/>
<evidence type="ECO:0000255" key="2">
    <source>
        <dbReference type="HAMAP-Rule" id="MF_00118"/>
    </source>
</evidence>
<gene>
    <name evidence="2" type="primary">tuf2</name>
    <name type="ordered locus">Wbm0653</name>
</gene>
<organism>
    <name type="scientific">Wolbachia sp. subsp. Brugia malayi (strain TRS)</name>
    <dbReference type="NCBI Taxonomy" id="292805"/>
    <lineage>
        <taxon>Bacteria</taxon>
        <taxon>Pseudomonadati</taxon>
        <taxon>Pseudomonadota</taxon>
        <taxon>Alphaproteobacteria</taxon>
        <taxon>Rickettsiales</taxon>
        <taxon>Anaplasmataceae</taxon>
        <taxon>Wolbachieae</taxon>
        <taxon>Wolbachia</taxon>
    </lineage>
</organism>
<name>EFTU2_WOLTR</name>
<proteinExistence type="inferred from homology"/>
<dbReference type="EC" id="3.6.5.3" evidence="2"/>
<dbReference type="EMBL" id="AE017321">
    <property type="protein sequence ID" value="AAW71241.1"/>
    <property type="molecule type" value="Genomic_DNA"/>
</dbReference>
<dbReference type="RefSeq" id="WP_011256851.1">
    <property type="nucleotide sequence ID" value="NC_006833.1"/>
</dbReference>
<dbReference type="SMR" id="Q5GRY3"/>
<dbReference type="STRING" id="292805.Wbm0653"/>
<dbReference type="KEGG" id="wbm:Wbm0653"/>
<dbReference type="eggNOG" id="COG0050">
    <property type="taxonomic scope" value="Bacteria"/>
</dbReference>
<dbReference type="HOGENOM" id="CLU_007265_0_0_5"/>
<dbReference type="Proteomes" id="UP000000534">
    <property type="component" value="Chromosome"/>
</dbReference>
<dbReference type="GO" id="GO:0005737">
    <property type="term" value="C:cytoplasm"/>
    <property type="evidence" value="ECO:0007669"/>
    <property type="project" value="UniProtKB-SubCell"/>
</dbReference>
<dbReference type="GO" id="GO:0005525">
    <property type="term" value="F:GTP binding"/>
    <property type="evidence" value="ECO:0007669"/>
    <property type="project" value="UniProtKB-UniRule"/>
</dbReference>
<dbReference type="GO" id="GO:0003924">
    <property type="term" value="F:GTPase activity"/>
    <property type="evidence" value="ECO:0007669"/>
    <property type="project" value="InterPro"/>
</dbReference>
<dbReference type="GO" id="GO:0097216">
    <property type="term" value="F:guanosine tetraphosphate binding"/>
    <property type="evidence" value="ECO:0007669"/>
    <property type="project" value="UniProtKB-ARBA"/>
</dbReference>
<dbReference type="GO" id="GO:0003746">
    <property type="term" value="F:translation elongation factor activity"/>
    <property type="evidence" value="ECO:0007669"/>
    <property type="project" value="UniProtKB-UniRule"/>
</dbReference>
<dbReference type="CDD" id="cd01884">
    <property type="entry name" value="EF_Tu"/>
    <property type="match status" value="1"/>
</dbReference>
<dbReference type="CDD" id="cd03697">
    <property type="entry name" value="EFTU_II"/>
    <property type="match status" value="1"/>
</dbReference>
<dbReference type="CDD" id="cd03707">
    <property type="entry name" value="EFTU_III"/>
    <property type="match status" value="1"/>
</dbReference>
<dbReference type="FunFam" id="2.40.30.10:FF:000001">
    <property type="entry name" value="Elongation factor Tu"/>
    <property type="match status" value="1"/>
</dbReference>
<dbReference type="FunFam" id="3.40.50.300:FF:000003">
    <property type="entry name" value="Elongation factor Tu"/>
    <property type="match status" value="1"/>
</dbReference>
<dbReference type="Gene3D" id="3.40.50.300">
    <property type="entry name" value="P-loop containing nucleotide triphosphate hydrolases"/>
    <property type="match status" value="1"/>
</dbReference>
<dbReference type="Gene3D" id="2.40.30.10">
    <property type="entry name" value="Translation factors"/>
    <property type="match status" value="2"/>
</dbReference>
<dbReference type="HAMAP" id="MF_00118_B">
    <property type="entry name" value="EF_Tu_B"/>
    <property type="match status" value="1"/>
</dbReference>
<dbReference type="InterPro" id="IPR041709">
    <property type="entry name" value="EF-Tu_GTP-bd"/>
</dbReference>
<dbReference type="InterPro" id="IPR050055">
    <property type="entry name" value="EF-Tu_GTPase"/>
</dbReference>
<dbReference type="InterPro" id="IPR004161">
    <property type="entry name" value="EFTu-like_2"/>
</dbReference>
<dbReference type="InterPro" id="IPR033720">
    <property type="entry name" value="EFTU_2"/>
</dbReference>
<dbReference type="InterPro" id="IPR031157">
    <property type="entry name" value="G_TR_CS"/>
</dbReference>
<dbReference type="InterPro" id="IPR027417">
    <property type="entry name" value="P-loop_NTPase"/>
</dbReference>
<dbReference type="InterPro" id="IPR005225">
    <property type="entry name" value="Small_GTP-bd"/>
</dbReference>
<dbReference type="InterPro" id="IPR000795">
    <property type="entry name" value="T_Tr_GTP-bd_dom"/>
</dbReference>
<dbReference type="InterPro" id="IPR009000">
    <property type="entry name" value="Transl_B-barrel_sf"/>
</dbReference>
<dbReference type="InterPro" id="IPR009001">
    <property type="entry name" value="Transl_elong_EF1A/Init_IF2_C"/>
</dbReference>
<dbReference type="InterPro" id="IPR004541">
    <property type="entry name" value="Transl_elong_EFTu/EF1A_bac/org"/>
</dbReference>
<dbReference type="InterPro" id="IPR004160">
    <property type="entry name" value="Transl_elong_EFTu/EF1A_C"/>
</dbReference>
<dbReference type="NCBIfam" id="TIGR00485">
    <property type="entry name" value="EF-Tu"/>
    <property type="match status" value="1"/>
</dbReference>
<dbReference type="NCBIfam" id="NF000766">
    <property type="entry name" value="PRK00049.1"/>
    <property type="match status" value="1"/>
</dbReference>
<dbReference type="NCBIfam" id="NF009372">
    <property type="entry name" value="PRK12735.1"/>
    <property type="match status" value="1"/>
</dbReference>
<dbReference type="NCBIfam" id="NF009373">
    <property type="entry name" value="PRK12736.1"/>
    <property type="match status" value="1"/>
</dbReference>
<dbReference type="NCBIfam" id="TIGR00231">
    <property type="entry name" value="small_GTP"/>
    <property type="match status" value="1"/>
</dbReference>
<dbReference type="PANTHER" id="PTHR43721:SF22">
    <property type="entry name" value="ELONGATION FACTOR TU, MITOCHONDRIAL"/>
    <property type="match status" value="1"/>
</dbReference>
<dbReference type="PANTHER" id="PTHR43721">
    <property type="entry name" value="ELONGATION FACTOR TU-RELATED"/>
    <property type="match status" value="1"/>
</dbReference>
<dbReference type="Pfam" id="PF00009">
    <property type="entry name" value="GTP_EFTU"/>
    <property type="match status" value="1"/>
</dbReference>
<dbReference type="Pfam" id="PF03144">
    <property type="entry name" value="GTP_EFTU_D2"/>
    <property type="match status" value="1"/>
</dbReference>
<dbReference type="Pfam" id="PF03143">
    <property type="entry name" value="GTP_EFTU_D3"/>
    <property type="match status" value="1"/>
</dbReference>
<dbReference type="PRINTS" id="PR00315">
    <property type="entry name" value="ELONGATNFCT"/>
</dbReference>
<dbReference type="SUPFAM" id="SSF50465">
    <property type="entry name" value="EF-Tu/eEF-1alpha/eIF2-gamma C-terminal domain"/>
    <property type="match status" value="1"/>
</dbReference>
<dbReference type="SUPFAM" id="SSF52540">
    <property type="entry name" value="P-loop containing nucleoside triphosphate hydrolases"/>
    <property type="match status" value="1"/>
</dbReference>
<dbReference type="SUPFAM" id="SSF50447">
    <property type="entry name" value="Translation proteins"/>
    <property type="match status" value="1"/>
</dbReference>
<dbReference type="PROSITE" id="PS00301">
    <property type="entry name" value="G_TR_1"/>
    <property type="match status" value="1"/>
</dbReference>
<dbReference type="PROSITE" id="PS51722">
    <property type="entry name" value="G_TR_2"/>
    <property type="match status" value="1"/>
</dbReference>
<accession>Q5GRY3</accession>